<feature type="signal peptide" evidence="2">
    <location>
        <begin position="1"/>
        <end position="29"/>
    </location>
</feature>
<feature type="chain" id="PRO_0000003962" description="Protocadherin gamma-A8">
    <location>
        <begin position="30"/>
        <end position="932"/>
    </location>
</feature>
<feature type="topological domain" description="Extracellular" evidence="2">
    <location>
        <begin position="30"/>
        <end position="692"/>
    </location>
</feature>
<feature type="transmembrane region" description="Helical" evidence="2">
    <location>
        <begin position="693"/>
        <end position="713"/>
    </location>
</feature>
<feature type="topological domain" description="Cytoplasmic" evidence="2">
    <location>
        <begin position="714"/>
        <end position="932"/>
    </location>
</feature>
<feature type="domain" description="Cadherin 1" evidence="3">
    <location>
        <begin position="30"/>
        <end position="133"/>
    </location>
</feature>
<feature type="domain" description="Cadherin 2" evidence="3">
    <location>
        <begin position="134"/>
        <end position="242"/>
    </location>
</feature>
<feature type="domain" description="Cadherin 3" evidence="3">
    <location>
        <begin position="243"/>
        <end position="347"/>
    </location>
</feature>
<feature type="domain" description="Cadherin 4" evidence="3">
    <location>
        <begin position="348"/>
        <end position="452"/>
    </location>
</feature>
<feature type="domain" description="Cadherin 5" evidence="3">
    <location>
        <begin position="453"/>
        <end position="562"/>
    </location>
</feature>
<feature type="domain" description="Cadherin 6" evidence="3">
    <location>
        <begin position="570"/>
        <end position="682"/>
    </location>
</feature>
<feature type="region of interest" description="Disordered" evidence="4">
    <location>
        <begin position="804"/>
        <end position="841"/>
    </location>
</feature>
<feature type="region of interest" description="Disordered" evidence="4">
    <location>
        <begin position="902"/>
        <end position="932"/>
    </location>
</feature>
<feature type="compositionally biased region" description="Polar residues" evidence="4">
    <location>
        <begin position="810"/>
        <end position="841"/>
    </location>
</feature>
<feature type="compositionally biased region" description="Basic residues" evidence="4">
    <location>
        <begin position="922"/>
        <end position="932"/>
    </location>
</feature>
<feature type="glycosylation site" description="N-linked (GlcNAc...) asparagine" evidence="2">
    <location>
        <position position="47"/>
    </location>
</feature>
<feature type="glycosylation site" description="N-linked (GlcNAc...) asparagine" evidence="2">
    <location>
        <position position="414"/>
    </location>
</feature>
<feature type="glycosylation site" description="N-linked (GlcNAc...) asparagine" evidence="2">
    <location>
        <position position="419"/>
    </location>
</feature>
<feature type="glycosylation site" description="N-linked (GlcNAc...) asparagine" evidence="2">
    <location>
        <position position="545"/>
    </location>
</feature>
<feature type="glycosylation site" description="N-linked (GlcNAc...) asparagine" evidence="2">
    <location>
        <position position="685"/>
    </location>
</feature>
<feature type="splice variant" id="VSP_008673" description="In isoform 2." evidence="5 6 7">
    <original>QAPPNTDWRFSQ</original>
    <variation>VSLVLCLLLISR</variation>
    <location>
        <begin position="809"/>
        <end position="820"/>
    </location>
</feature>
<feature type="splice variant" id="VSP_008674" description="In isoform 2." evidence="5 6 7">
    <location>
        <begin position="821"/>
        <end position="932"/>
    </location>
</feature>
<feature type="sequence variant" id="VAR_048564" description="In dbSNP:rs726684.">
    <original>L</original>
    <variation>R</variation>
    <location>
        <position position="16"/>
    </location>
</feature>
<feature type="sequence variant" id="VAR_061070" description="In dbSNP:rs11575958.">
    <original>N</original>
    <variation>K</variation>
    <location>
        <position position="187"/>
    </location>
</feature>
<accession>Q9Y5G5</accession>
<accession>A7MCZ4</accession>
<accession>O15039</accession>
<organism>
    <name type="scientific">Homo sapiens</name>
    <name type="common">Human</name>
    <dbReference type="NCBI Taxonomy" id="9606"/>
    <lineage>
        <taxon>Eukaryota</taxon>
        <taxon>Metazoa</taxon>
        <taxon>Chordata</taxon>
        <taxon>Craniata</taxon>
        <taxon>Vertebrata</taxon>
        <taxon>Euteleostomi</taxon>
        <taxon>Mammalia</taxon>
        <taxon>Eutheria</taxon>
        <taxon>Euarchontoglires</taxon>
        <taxon>Primates</taxon>
        <taxon>Haplorrhini</taxon>
        <taxon>Catarrhini</taxon>
        <taxon>Hominidae</taxon>
        <taxon>Homo</taxon>
    </lineage>
</organism>
<dbReference type="EMBL" id="AF152328">
    <property type="protein sequence ID" value="AAD43722.1"/>
    <property type="molecule type" value="mRNA"/>
</dbReference>
<dbReference type="EMBL" id="AF152515">
    <property type="protein sequence ID" value="AAD43775.1"/>
    <property type="molecule type" value="mRNA"/>
</dbReference>
<dbReference type="EMBL" id="AB002325">
    <property type="protein sequence ID" value="BAA20785.2"/>
    <property type="status" value="ALT_INIT"/>
    <property type="molecule type" value="mRNA"/>
</dbReference>
<dbReference type="EMBL" id="CH471062">
    <property type="protein sequence ID" value="EAW61942.1"/>
    <property type="molecule type" value="Genomic_DNA"/>
</dbReference>
<dbReference type="EMBL" id="BC152415">
    <property type="protein sequence ID" value="AAI52416.1"/>
    <property type="molecule type" value="mRNA"/>
</dbReference>
<dbReference type="CCDS" id="CCDS47291.1">
    <molecule id="Q9Y5G5-1"/>
</dbReference>
<dbReference type="CCDS" id="CCDS75338.1">
    <molecule id="Q9Y5G5-2"/>
</dbReference>
<dbReference type="RefSeq" id="NP_054723.1">
    <molecule id="Q9Y5G5-2"/>
    <property type="nucleotide sequence ID" value="NM_014004.3"/>
</dbReference>
<dbReference type="RefSeq" id="NP_114477.1">
    <molecule id="Q9Y5G5-1"/>
    <property type="nucleotide sequence ID" value="NM_032088.2"/>
</dbReference>
<dbReference type="SMR" id="Q9Y5G5"/>
<dbReference type="BioGRID" id="115059">
    <property type="interactions" value="4"/>
</dbReference>
<dbReference type="FunCoup" id="Q9Y5G5">
    <property type="interactions" value="50"/>
</dbReference>
<dbReference type="IntAct" id="Q9Y5G5">
    <property type="interactions" value="3"/>
</dbReference>
<dbReference type="STRING" id="9606.ENSP00000381605"/>
<dbReference type="GlyCosmos" id="Q9Y5G5">
    <property type="glycosylation" value="5 sites, No reported glycans"/>
</dbReference>
<dbReference type="GlyGen" id="Q9Y5G5">
    <property type="glycosylation" value="5 sites, 1 N-linked glycan (1 site)"/>
</dbReference>
<dbReference type="iPTMnet" id="Q9Y5G5"/>
<dbReference type="PhosphoSitePlus" id="Q9Y5G5"/>
<dbReference type="BioMuta" id="PCDHGA8"/>
<dbReference type="DMDM" id="37999835"/>
<dbReference type="jPOST" id="Q9Y5G5"/>
<dbReference type="MassIVE" id="Q9Y5G5"/>
<dbReference type="PaxDb" id="9606-ENSP00000381605"/>
<dbReference type="PeptideAtlas" id="Q9Y5G5"/>
<dbReference type="ProteomicsDB" id="86371">
    <molecule id="Q9Y5G5-1"/>
</dbReference>
<dbReference type="ProteomicsDB" id="86372">
    <molecule id="Q9Y5G5-2"/>
</dbReference>
<dbReference type="Antibodypedia" id="56132">
    <property type="antibodies" value="101 antibodies from 17 providers"/>
</dbReference>
<dbReference type="DNASU" id="9708"/>
<dbReference type="Ensembl" id="ENST00000398604.3">
    <molecule id="Q9Y5G5-1"/>
    <property type="protein sequence ID" value="ENSP00000381605.2"/>
    <property type="gene ID" value="ENSG00000253767.3"/>
</dbReference>
<dbReference type="Ensembl" id="ENST00000610569.1">
    <molecule id="Q9Y5G5-2"/>
    <property type="protein sequence ID" value="ENSP00000483161.1"/>
    <property type="gene ID" value="ENSG00000253767.3"/>
</dbReference>
<dbReference type="GeneID" id="9708"/>
<dbReference type="KEGG" id="hsa:9708"/>
<dbReference type="MANE-Select" id="ENST00000398604.3">
    <property type="protein sequence ID" value="ENSP00000381605.2"/>
    <property type="RefSeq nucleotide sequence ID" value="NM_032088.2"/>
    <property type="RefSeq protein sequence ID" value="NP_114477.1"/>
</dbReference>
<dbReference type="UCSC" id="uc003lkb.5">
    <molecule id="Q9Y5G5-1"/>
    <property type="organism name" value="human"/>
</dbReference>
<dbReference type="AGR" id="HGNC:8706"/>
<dbReference type="CTD" id="9708"/>
<dbReference type="DisGeNET" id="9708"/>
<dbReference type="GeneCards" id="PCDHGA8"/>
<dbReference type="HGNC" id="HGNC:8706">
    <property type="gene designation" value="PCDHGA8"/>
</dbReference>
<dbReference type="HPA" id="ENSG00000253767">
    <property type="expression patterns" value="Not detected"/>
</dbReference>
<dbReference type="MalaCards" id="PCDHGA8"/>
<dbReference type="MIM" id="604968">
    <property type="type" value="gene"/>
</dbReference>
<dbReference type="MIM" id="606295">
    <property type="type" value="gene"/>
</dbReference>
<dbReference type="neXtProt" id="NX_Q9Y5G5"/>
<dbReference type="OpenTargets" id="ENSG00000253767"/>
<dbReference type="PharmGKB" id="PA33054"/>
<dbReference type="VEuPathDB" id="HostDB:ENSG00000253767"/>
<dbReference type="eggNOG" id="KOG3594">
    <property type="taxonomic scope" value="Eukaryota"/>
</dbReference>
<dbReference type="GeneTree" id="ENSGT00940000164488"/>
<dbReference type="HOGENOM" id="CLU_006480_3_0_1"/>
<dbReference type="InParanoid" id="Q9Y5G5"/>
<dbReference type="OMA" id="CSSYEME"/>
<dbReference type="OrthoDB" id="6252479at2759"/>
<dbReference type="PAN-GO" id="Q9Y5G5">
    <property type="GO annotations" value="2 GO annotations based on evolutionary models"/>
</dbReference>
<dbReference type="PhylomeDB" id="Q9Y5G5"/>
<dbReference type="TreeFam" id="TF332299"/>
<dbReference type="PathwayCommons" id="Q9Y5G5"/>
<dbReference type="SignaLink" id="Q9Y5G5"/>
<dbReference type="SIGNOR" id="Q9Y5G5"/>
<dbReference type="BioGRID-ORCS" id="9708">
    <property type="hits" value="13 hits in 1085 CRISPR screens"/>
</dbReference>
<dbReference type="ChiTaRS" id="PCDHGA8">
    <property type="organism name" value="human"/>
</dbReference>
<dbReference type="GenomeRNAi" id="9708"/>
<dbReference type="Pharos" id="Q9Y5G5">
    <property type="development level" value="Tdark"/>
</dbReference>
<dbReference type="PRO" id="PR:Q9Y5G5"/>
<dbReference type="Proteomes" id="UP000005640">
    <property type="component" value="Chromosome 5"/>
</dbReference>
<dbReference type="RNAct" id="Q9Y5G5">
    <property type="molecule type" value="protein"/>
</dbReference>
<dbReference type="Bgee" id="ENSG00000253767">
    <property type="expression patterns" value="Expressed in buccal mucosa cell and 75 other cell types or tissues"/>
</dbReference>
<dbReference type="GO" id="GO:0005886">
    <property type="term" value="C:plasma membrane"/>
    <property type="evidence" value="ECO:0000318"/>
    <property type="project" value="GO_Central"/>
</dbReference>
<dbReference type="GO" id="GO:0005509">
    <property type="term" value="F:calcium ion binding"/>
    <property type="evidence" value="ECO:0007669"/>
    <property type="project" value="InterPro"/>
</dbReference>
<dbReference type="GO" id="GO:0007155">
    <property type="term" value="P:cell adhesion"/>
    <property type="evidence" value="ECO:0000318"/>
    <property type="project" value="GO_Central"/>
</dbReference>
<dbReference type="GO" id="GO:0007156">
    <property type="term" value="P:homophilic cell adhesion via plasma membrane adhesion molecules"/>
    <property type="evidence" value="ECO:0007669"/>
    <property type="project" value="InterPro"/>
</dbReference>
<dbReference type="GO" id="GO:0007399">
    <property type="term" value="P:nervous system development"/>
    <property type="evidence" value="ECO:0007669"/>
    <property type="project" value="UniProtKB-ARBA"/>
</dbReference>
<dbReference type="CDD" id="cd11304">
    <property type="entry name" value="Cadherin_repeat"/>
    <property type="match status" value="6"/>
</dbReference>
<dbReference type="FunFam" id="2.60.40.60:FF:000004">
    <property type="entry name" value="Protocadherin 1 gamma 2"/>
    <property type="match status" value="1"/>
</dbReference>
<dbReference type="FunFam" id="2.60.40.60:FF:000001">
    <property type="entry name" value="Protocadherin alpha 2"/>
    <property type="match status" value="1"/>
</dbReference>
<dbReference type="FunFam" id="2.60.40.60:FF:000002">
    <property type="entry name" value="Protocadherin alpha 2"/>
    <property type="match status" value="1"/>
</dbReference>
<dbReference type="FunFam" id="2.60.40.60:FF:000006">
    <property type="entry name" value="Protocadherin alpha 2"/>
    <property type="match status" value="1"/>
</dbReference>
<dbReference type="FunFam" id="2.60.40.60:FF:000129">
    <property type="entry name" value="protocadherin alpha-C2 isoform X1"/>
    <property type="match status" value="1"/>
</dbReference>
<dbReference type="FunFam" id="2.60.40.60:FF:000018">
    <property type="entry name" value="Protocadherin gamma c3"/>
    <property type="match status" value="1"/>
</dbReference>
<dbReference type="Gene3D" id="2.60.40.60">
    <property type="entry name" value="Cadherins"/>
    <property type="match status" value="6"/>
</dbReference>
<dbReference type="InterPro" id="IPR002126">
    <property type="entry name" value="Cadherin-like_dom"/>
</dbReference>
<dbReference type="InterPro" id="IPR015919">
    <property type="entry name" value="Cadherin-like_sf"/>
</dbReference>
<dbReference type="InterPro" id="IPR032455">
    <property type="entry name" value="Cadherin_C"/>
</dbReference>
<dbReference type="InterPro" id="IPR031904">
    <property type="entry name" value="Cadherin_CBD"/>
</dbReference>
<dbReference type="InterPro" id="IPR020894">
    <property type="entry name" value="Cadherin_CS"/>
</dbReference>
<dbReference type="InterPro" id="IPR013164">
    <property type="entry name" value="Cadherin_N"/>
</dbReference>
<dbReference type="InterPro" id="IPR050174">
    <property type="entry name" value="Protocadherin/Cadherin-CA"/>
</dbReference>
<dbReference type="PANTHER" id="PTHR24028">
    <property type="entry name" value="CADHERIN-87A"/>
    <property type="match status" value="1"/>
</dbReference>
<dbReference type="PANTHER" id="PTHR24028:SF72">
    <property type="entry name" value="PROTOCADHERIN GAMMA-A8"/>
    <property type="match status" value="1"/>
</dbReference>
<dbReference type="Pfam" id="PF00028">
    <property type="entry name" value="Cadherin"/>
    <property type="match status" value="5"/>
</dbReference>
<dbReference type="Pfam" id="PF08266">
    <property type="entry name" value="Cadherin_2"/>
    <property type="match status" value="1"/>
</dbReference>
<dbReference type="Pfam" id="PF16492">
    <property type="entry name" value="Cadherin_C_2"/>
    <property type="match status" value="1"/>
</dbReference>
<dbReference type="Pfam" id="PF15974">
    <property type="entry name" value="Cadherin_tail"/>
    <property type="match status" value="1"/>
</dbReference>
<dbReference type="PRINTS" id="PR00205">
    <property type="entry name" value="CADHERIN"/>
</dbReference>
<dbReference type="SMART" id="SM00112">
    <property type="entry name" value="CA"/>
    <property type="match status" value="6"/>
</dbReference>
<dbReference type="SUPFAM" id="SSF49313">
    <property type="entry name" value="Cadherin-like"/>
    <property type="match status" value="6"/>
</dbReference>
<dbReference type="PROSITE" id="PS00232">
    <property type="entry name" value="CADHERIN_1"/>
    <property type="match status" value="5"/>
</dbReference>
<dbReference type="PROSITE" id="PS50268">
    <property type="entry name" value="CADHERIN_2"/>
    <property type="match status" value="6"/>
</dbReference>
<comment type="function">
    <text>Potential calcium-dependent cell-adhesion protein. May be involved in the establishment and maintenance of specific neuronal connections in the brain.</text>
</comment>
<comment type="subcellular location">
    <subcellularLocation>
        <location evidence="1">Cell membrane</location>
        <topology evidence="1">Single-pass type I membrane protein</topology>
    </subcellularLocation>
</comment>
<comment type="alternative products">
    <event type="alternative splicing"/>
    <isoform>
        <id>Q9Y5G5-1</id>
        <name>1</name>
        <sequence type="displayed"/>
    </isoform>
    <isoform>
        <id>Q9Y5G5-2</id>
        <name>2</name>
        <name>Short</name>
        <sequence type="described" ref="VSP_008673 VSP_008674"/>
    </isoform>
</comment>
<comment type="sequence caution" evidence="8">
    <conflict type="erroneous initiation">
        <sequence resource="EMBL-CDS" id="BAA20785"/>
    </conflict>
</comment>
<protein>
    <recommendedName>
        <fullName>Protocadherin gamma-A8</fullName>
        <shortName>PCDH-gamma-A8</shortName>
    </recommendedName>
</protein>
<name>PCDG8_HUMAN</name>
<sequence>MAAPQSRPRRGELILLCALLGTLWEIGRGQIRYSVPEETDKGSFVGNISKDLGLDPRKLAKHGVRIVSRGRTQLFALNPRSGSLITAGRIDREELCAQSPRCLININTLVEDKGKLFGVEIEIIDINDNNPKFQVEDLEVKINEIAVPGARYPLPEAVDPDVGVNSLQSYQLSPNHHFSLDVQTGDNGAINPELVLERALDREEEAAHHLVLTASDGGKPPRSSTVRIHVTVLDTNDNAPVFPHPIYRVKVLENMPPGTRLLTVTASDPDEGINGKVAYKFRKINEKQTPLFQLNENTGEISIAKSLDYEECSFYEMEIQAEDVGALLGRTKLLISVEDVNDNRPEVIITSLFSPVLENSLPGTVIAFLSVHDQDSGKNGQVVCYTRDNLPFKLEKSIGNYYRLVTRKYLDRENVSIYNITVMASDLGTPPLSTETQIALHVADINDNPPTFPHASYSAYILENNLRGASIFSLTAHDPDSQENAQVTYSVTEDTLQGAPLSSYISINSDTGVLYALQSFDYEQIRDLQLLVTASDSGDPPLSSNMSLSLFVLDQNDNAPEILYPALPTDGSTGVELAPRSAERGYLVTKVVAVDRDSGQNAWLSYRLLKASEPGLFSVGLHTGEVRTARALLDRDALKQSLVVAVQDHGQPPLSATVTLTVAVADSIPEVLTELGSLKPSVDPNDSSLTLYLVVAVAAISCVFLAFVAVLLGLRLRRWHKSRLLQDSGGRLVGVPASHFVGVEEVQAFLQTYSQEVSLTADSRKSHLIFPQPNYADMLISQEGCEKNDSLLTSVDFHEYKNEADHGQQAPPNTDWRFSQAQRPGTSGSQNGDDTGTWPNNQFDTEMLQAMILASASEAADGSSTLGGGAGTMGLSARYGPQFTLQHVPDYRQNVYIPGSNATLTNAAGKRDGKAPAGGNGNKKKSGKKEKK</sequence>
<evidence type="ECO:0000250" key="1"/>
<evidence type="ECO:0000255" key="2"/>
<evidence type="ECO:0000255" key="3">
    <source>
        <dbReference type="PROSITE-ProRule" id="PRU00043"/>
    </source>
</evidence>
<evidence type="ECO:0000256" key="4">
    <source>
        <dbReference type="SAM" id="MobiDB-lite"/>
    </source>
</evidence>
<evidence type="ECO:0000303" key="5">
    <source>
    </source>
</evidence>
<evidence type="ECO:0000303" key="6">
    <source>
    </source>
</evidence>
<evidence type="ECO:0000303" key="7">
    <source>
    </source>
</evidence>
<evidence type="ECO:0000305" key="8"/>
<reference key="1">
    <citation type="journal article" date="1999" name="Cell">
        <title>A striking organization of a large family of human neural cadherin-like cell adhesion genes.</title>
        <authorList>
            <person name="Wu Q."/>
            <person name="Maniatis T."/>
        </authorList>
    </citation>
    <scope>NUCLEOTIDE SEQUENCE [MRNA] (ISOFORMS 1 AND 2)</scope>
    <source>
        <tissue>Brain</tissue>
    </source>
</reference>
<reference key="2">
    <citation type="journal article" date="1997" name="DNA Res.">
        <title>Prediction of the coding sequences of unidentified human genes. VII. The complete sequences of 100 new cDNA clones from brain which can code for large proteins in vitro.</title>
        <authorList>
            <person name="Nagase T."/>
            <person name="Ishikawa K."/>
            <person name="Nakajima D."/>
            <person name="Ohira M."/>
            <person name="Seki N."/>
            <person name="Miyajima N."/>
            <person name="Tanaka A."/>
            <person name="Kotani H."/>
            <person name="Nomura N."/>
            <person name="Ohara O."/>
        </authorList>
    </citation>
    <scope>NUCLEOTIDE SEQUENCE [LARGE SCALE MRNA] (ISOFORM 2)</scope>
    <source>
        <tissue>Brain</tissue>
    </source>
</reference>
<reference key="3">
    <citation type="submission" date="2005-09" db="EMBL/GenBank/DDBJ databases">
        <authorList>
            <person name="Mural R.J."/>
            <person name="Istrail S."/>
            <person name="Sutton G.G."/>
            <person name="Florea L."/>
            <person name="Halpern A.L."/>
            <person name="Mobarry C.M."/>
            <person name="Lippert R."/>
            <person name="Walenz B."/>
            <person name="Shatkay H."/>
            <person name="Dew I."/>
            <person name="Miller J.R."/>
            <person name="Flanigan M.J."/>
            <person name="Edwards N.J."/>
            <person name="Bolanos R."/>
            <person name="Fasulo D."/>
            <person name="Halldorsson B.V."/>
            <person name="Hannenhalli S."/>
            <person name="Turner R."/>
            <person name="Yooseph S."/>
            <person name="Lu F."/>
            <person name="Nusskern D.R."/>
            <person name="Shue B.C."/>
            <person name="Zheng X.H."/>
            <person name="Zhong F."/>
            <person name="Delcher A.L."/>
            <person name="Huson D.H."/>
            <person name="Kravitz S.A."/>
            <person name="Mouchard L."/>
            <person name="Reinert K."/>
            <person name="Remington K.A."/>
            <person name="Clark A.G."/>
            <person name="Waterman M.S."/>
            <person name="Eichler E.E."/>
            <person name="Adams M.D."/>
            <person name="Hunkapiller M.W."/>
            <person name="Myers E.W."/>
            <person name="Venter J.C."/>
        </authorList>
    </citation>
    <scope>NUCLEOTIDE SEQUENCE [LARGE SCALE GENOMIC DNA]</scope>
</reference>
<reference key="4">
    <citation type="journal article" date="2004" name="Genome Res.">
        <title>The status, quality, and expansion of the NIH full-length cDNA project: the Mammalian Gene Collection (MGC).</title>
        <authorList>
            <consortium name="The MGC Project Team"/>
        </authorList>
    </citation>
    <scope>NUCLEOTIDE SEQUENCE [LARGE SCALE MRNA] (ISOFORM 2)</scope>
</reference>
<keyword id="KW-0025">Alternative splicing</keyword>
<keyword id="KW-0106">Calcium</keyword>
<keyword id="KW-0130">Cell adhesion</keyword>
<keyword id="KW-1003">Cell membrane</keyword>
<keyword id="KW-0325">Glycoprotein</keyword>
<keyword id="KW-0472">Membrane</keyword>
<keyword id="KW-1185">Reference proteome</keyword>
<keyword id="KW-0677">Repeat</keyword>
<keyword id="KW-0732">Signal</keyword>
<keyword id="KW-0812">Transmembrane</keyword>
<keyword id="KW-1133">Transmembrane helix</keyword>
<proteinExistence type="evidence at transcript level"/>
<gene>
    <name type="primary">PCDHGA8</name>
    <name type="synonym">KIAA0327</name>
</gene>